<reference key="1">
    <citation type="journal article" date="2015" name="Genome Announc.">
        <title>Genome sequence of the AIDS-associated pathogen Penicillium marneffei (ATCC18224) and its near taxonomic relative Talaromyces stipitatus (ATCC10500).</title>
        <authorList>
            <person name="Nierman W.C."/>
            <person name="Fedorova-Abrams N.D."/>
            <person name="Andrianopoulos A."/>
        </authorList>
    </citation>
    <scope>NUCLEOTIDE SEQUENCE [LARGE SCALE GENOMIC DNA]</scope>
    <source>
        <strain>ATCC 10500 / CBS 375.48 / QM 6759 / NRRL 1006</strain>
    </source>
</reference>
<name>RS3A_TALSN</name>
<protein>
    <recommendedName>
        <fullName evidence="1">Small ribosomal subunit protein eS1</fullName>
    </recommendedName>
    <alternativeName>
        <fullName evidence="3">40S ribosomal protein S1</fullName>
    </alternativeName>
</protein>
<feature type="initiator methionine" description="Removed" evidence="1">
    <location>
        <position position="1"/>
    </location>
</feature>
<feature type="chain" id="PRO_0000389414" description="Small ribosomal subunit protein eS1">
    <location>
        <begin position="2"/>
        <end position="256"/>
    </location>
</feature>
<feature type="region of interest" description="Disordered" evidence="2">
    <location>
        <begin position="1"/>
        <end position="20"/>
    </location>
</feature>
<feature type="compositionally biased region" description="Basic residues" evidence="2">
    <location>
        <begin position="1"/>
        <end position="18"/>
    </location>
</feature>
<feature type="modified residue" description="N-acetylalanine; partial" evidence="1">
    <location>
        <position position="2"/>
    </location>
</feature>
<organism>
    <name type="scientific">Talaromyces stipitatus (strain ATCC 10500 / CBS 375.48 / QM 6759 / NRRL 1006)</name>
    <name type="common">Penicillium stipitatum</name>
    <dbReference type="NCBI Taxonomy" id="441959"/>
    <lineage>
        <taxon>Eukaryota</taxon>
        <taxon>Fungi</taxon>
        <taxon>Dikarya</taxon>
        <taxon>Ascomycota</taxon>
        <taxon>Pezizomycotina</taxon>
        <taxon>Eurotiomycetes</taxon>
        <taxon>Eurotiomycetidae</taxon>
        <taxon>Eurotiales</taxon>
        <taxon>Trichocomaceae</taxon>
        <taxon>Talaromyces</taxon>
        <taxon>Talaromyces sect. Talaromyces</taxon>
    </lineage>
</organism>
<comment type="subunit">
    <text evidence="1">Component of the small ribosomal subunit. Mature ribosomes consist of a small (40S) and a large (60S) subunit. The 40S subunit contains about 33 different proteins and 1 molecule of RNA (18S). The 60S subunit contains about 49 different proteins and 3 molecules of RNA (25S, 5.8S and 5S).</text>
</comment>
<comment type="subcellular location">
    <subcellularLocation>
        <location evidence="1">Cytoplasm</location>
    </subcellularLocation>
</comment>
<comment type="similarity">
    <text evidence="1">Belongs to the eukaryotic ribosomal protein eS1 family.</text>
</comment>
<dbReference type="EMBL" id="EQ962655">
    <property type="protein sequence ID" value="EED18432.1"/>
    <property type="molecule type" value="Genomic_DNA"/>
</dbReference>
<dbReference type="RefSeq" id="XP_002482424.1">
    <property type="nucleotide sequence ID" value="XM_002482379.1"/>
</dbReference>
<dbReference type="SMR" id="B8MBY6"/>
<dbReference type="FunCoup" id="B8MBY6">
    <property type="interactions" value="1326"/>
</dbReference>
<dbReference type="STRING" id="441959.B8MBY6"/>
<dbReference type="GeneID" id="8098160"/>
<dbReference type="VEuPathDB" id="FungiDB:TSTA_121710"/>
<dbReference type="eggNOG" id="KOG1628">
    <property type="taxonomic scope" value="Eukaryota"/>
</dbReference>
<dbReference type="HOGENOM" id="CLU_062507_0_0_1"/>
<dbReference type="InParanoid" id="B8MBY6"/>
<dbReference type="OMA" id="TRFKGHE"/>
<dbReference type="OrthoDB" id="9834376at2759"/>
<dbReference type="PhylomeDB" id="B8MBY6"/>
<dbReference type="Proteomes" id="UP000001745">
    <property type="component" value="Unassembled WGS sequence"/>
</dbReference>
<dbReference type="GO" id="GO:0022627">
    <property type="term" value="C:cytosolic small ribosomal subunit"/>
    <property type="evidence" value="ECO:0007669"/>
    <property type="project" value="UniProtKB-UniRule"/>
</dbReference>
<dbReference type="GO" id="GO:0003735">
    <property type="term" value="F:structural constituent of ribosome"/>
    <property type="evidence" value="ECO:0007669"/>
    <property type="project" value="UniProtKB-UniRule"/>
</dbReference>
<dbReference type="GO" id="GO:0006412">
    <property type="term" value="P:translation"/>
    <property type="evidence" value="ECO:0007669"/>
    <property type="project" value="UniProtKB-UniRule"/>
</dbReference>
<dbReference type="HAMAP" id="MF_03122">
    <property type="entry name" value="Ribosomal_eS1_euk"/>
    <property type="match status" value="1"/>
</dbReference>
<dbReference type="InterPro" id="IPR001593">
    <property type="entry name" value="Ribosomal_eS1"/>
</dbReference>
<dbReference type="InterPro" id="IPR018281">
    <property type="entry name" value="Ribosomal_eS1_CS"/>
</dbReference>
<dbReference type="InterPro" id="IPR027500">
    <property type="entry name" value="Ribosomal_eS1_euk"/>
</dbReference>
<dbReference type="PANTHER" id="PTHR11830">
    <property type="entry name" value="40S RIBOSOMAL PROTEIN S3A"/>
    <property type="match status" value="1"/>
</dbReference>
<dbReference type="Pfam" id="PF01015">
    <property type="entry name" value="Ribosomal_S3Ae"/>
    <property type="match status" value="1"/>
</dbReference>
<dbReference type="SMART" id="SM01397">
    <property type="entry name" value="Ribosomal_S3Ae"/>
    <property type="match status" value="1"/>
</dbReference>
<dbReference type="PROSITE" id="PS01191">
    <property type="entry name" value="RIBOSOMAL_S3AE"/>
    <property type="match status" value="1"/>
</dbReference>
<keyword id="KW-0007">Acetylation</keyword>
<keyword id="KW-0963">Cytoplasm</keyword>
<keyword id="KW-1185">Reference proteome</keyword>
<keyword id="KW-0687">Ribonucleoprotein</keyword>
<keyword id="KW-0689">Ribosomal protein</keyword>
<proteinExistence type="inferred from homology"/>
<evidence type="ECO:0000255" key="1">
    <source>
        <dbReference type="HAMAP-Rule" id="MF_03122"/>
    </source>
</evidence>
<evidence type="ECO:0000256" key="2">
    <source>
        <dbReference type="SAM" id="MobiDB-lite"/>
    </source>
</evidence>
<evidence type="ECO:0000305" key="3"/>
<sequence length="256" mass="29184">MAVGKNKRLSKGKKGLKKRTVDPFSRKDEYSVKAPSTFQIRDVGKTLVNRTTGLKNANDSLKGRIFEVSLADLQNDEDHAFRKVKLRVDEVQGKNCLTNFHGLDFTSDKLRSLVRKWQSLIEANVTVKTTDDYLLRLFAIAFTKRRPNQIKKTTYARSSQIRAIRKKMTEIIQREAASCTLSQLTTKLIPEVIGREIEKSTQGIYPLQNVHIRKVKLLKSPKFDLGALLNLHGESTTDDQGHKVEREFKETVLESV</sequence>
<gene>
    <name type="primary">rps1</name>
    <name type="ORF">TSTA_121710</name>
</gene>
<accession>B8MBY6</accession>